<gene>
    <name type="ORF">5a</name>
</gene>
<organismHost>
    <name type="scientific">Bos taurus</name>
    <name type="common">Bovine</name>
    <dbReference type="NCBI Taxonomy" id="9913"/>
</organismHost>
<accession>P69609</accession>
<accession>P15774</accession>
<reference key="1">
    <citation type="journal article" date="1990" name="Virology">
        <title>Sequence and expression analysis of potential nonstructural proteins of 4.9, 4.8, 12.7, and 9.5 kDa encoded between the spike and membrane protein genes of the bovine coronavirus.</title>
        <authorList>
            <person name="Abraham S."/>
            <person name="Kienzle T.E."/>
            <person name="Lapps W.E."/>
            <person name="Brian D.A."/>
        </authorList>
    </citation>
    <scope>NUCLEOTIDE SEQUENCE [GENOMIC RNA]</scope>
</reference>
<protein>
    <recommendedName>
        <fullName>Non-structural protein of 12.7 kDa</fullName>
        <shortName>ns12.7</shortName>
    </recommendedName>
    <alternativeName>
        <fullName>12.7 kDa accessory protein</fullName>
    </alternativeName>
</protein>
<dbReference type="EMBL" id="U00735">
    <property type="protein sequence ID" value="AAA42913.1"/>
    <property type="molecule type" value="Genomic_RNA"/>
</dbReference>
<dbReference type="PIR" id="S08408">
    <property type="entry name" value="MNIHB2"/>
</dbReference>
<dbReference type="Proteomes" id="UP000007554">
    <property type="component" value="Genome"/>
</dbReference>
<dbReference type="InterPro" id="IPR006841">
    <property type="entry name" value="Corona_NS2"/>
</dbReference>
<dbReference type="Pfam" id="PF04753">
    <property type="entry name" value="Corona_NS12-7"/>
    <property type="match status" value="1"/>
</dbReference>
<comment type="similarity">
    <text evidence="1">Belongs to the coronaviruses ns12.7 protein family.</text>
</comment>
<sequence>MDIWRPEIKYLRYTNGFNVSELEDACFKFNYKFPKVGYCRVPSHAWCRNQGSFCATLTLYGKSKHYDKYFGVITGFTAFANTVEEAVNKLVFLAVDFITWRRQELNVYG</sequence>
<proteinExistence type="inferred from homology"/>
<name>NS12_CVBM</name>
<organism>
    <name type="scientific">Bovine coronavirus (strain Mebus)</name>
    <name type="common">BCoV</name>
    <name type="synonym">BCV</name>
    <dbReference type="NCBI Taxonomy" id="11132"/>
    <lineage>
        <taxon>Viruses</taxon>
        <taxon>Riboviria</taxon>
        <taxon>Orthornavirae</taxon>
        <taxon>Pisuviricota</taxon>
        <taxon>Pisoniviricetes</taxon>
        <taxon>Nidovirales</taxon>
        <taxon>Cornidovirineae</taxon>
        <taxon>Coronaviridae</taxon>
        <taxon>Orthocoronavirinae</taxon>
        <taxon>Betacoronavirus</taxon>
        <taxon>Embecovirus</taxon>
        <taxon>Betacoronavirus 1</taxon>
    </lineage>
</organism>
<evidence type="ECO:0000305" key="1"/>
<feature type="chain" id="PRO_0000106064" description="Non-structural protein of 12.7 kDa">
    <location>
        <begin position="1"/>
        <end position="109"/>
    </location>
</feature>